<reference key="1">
    <citation type="journal article" date="1995" name="Yeast">
        <title>Sequence analysis of a 78.6 kb segment of the left end of Saccharomyces cerevisiae chromosome II.</title>
        <authorList>
            <person name="Obermaier B."/>
            <person name="Gassenhuber J."/>
            <person name="Piravandi E."/>
            <person name="Domdey H."/>
        </authorList>
    </citation>
    <scope>NUCLEOTIDE SEQUENCE [GENOMIC DNA]</scope>
    <source>
        <strain>ATCC 204508 / S288c</strain>
    </source>
</reference>
<reference key="2">
    <citation type="journal article" date="1994" name="EMBO J.">
        <title>Complete DNA sequence of yeast chromosome II.</title>
        <authorList>
            <person name="Feldmann H."/>
            <person name="Aigle M."/>
            <person name="Aljinovic G."/>
            <person name="Andre B."/>
            <person name="Baclet M.C."/>
            <person name="Barthe C."/>
            <person name="Baur A."/>
            <person name="Becam A.-M."/>
            <person name="Biteau N."/>
            <person name="Boles E."/>
            <person name="Brandt T."/>
            <person name="Brendel M."/>
            <person name="Brueckner M."/>
            <person name="Bussereau F."/>
            <person name="Christiansen C."/>
            <person name="Contreras R."/>
            <person name="Crouzet M."/>
            <person name="Cziepluch C."/>
            <person name="Demolis N."/>
            <person name="Delaveau T."/>
            <person name="Doignon F."/>
            <person name="Domdey H."/>
            <person name="Duesterhus S."/>
            <person name="Dubois E."/>
            <person name="Dujon B."/>
            <person name="El Bakkoury M."/>
            <person name="Entian K.-D."/>
            <person name="Feuermann M."/>
            <person name="Fiers W."/>
            <person name="Fobo G.M."/>
            <person name="Fritz C."/>
            <person name="Gassenhuber J."/>
            <person name="Glansdorff N."/>
            <person name="Goffeau A."/>
            <person name="Grivell L.A."/>
            <person name="de Haan M."/>
            <person name="Hein C."/>
            <person name="Herbert C.J."/>
            <person name="Hollenberg C.P."/>
            <person name="Holmstroem K."/>
            <person name="Jacq C."/>
            <person name="Jacquet M."/>
            <person name="Jauniaux J.-C."/>
            <person name="Jonniaux J.-L."/>
            <person name="Kallesoee T."/>
            <person name="Kiesau P."/>
            <person name="Kirchrath L."/>
            <person name="Koetter P."/>
            <person name="Korol S."/>
            <person name="Liebl S."/>
            <person name="Logghe M."/>
            <person name="Lohan A.J.E."/>
            <person name="Louis E.J."/>
            <person name="Li Z.Y."/>
            <person name="Maat M.J."/>
            <person name="Mallet L."/>
            <person name="Mannhaupt G."/>
            <person name="Messenguy F."/>
            <person name="Miosga T."/>
            <person name="Molemans F."/>
            <person name="Mueller S."/>
            <person name="Nasr F."/>
            <person name="Obermaier B."/>
            <person name="Perea J."/>
            <person name="Pierard A."/>
            <person name="Piravandi E."/>
            <person name="Pohl F.M."/>
            <person name="Pohl T.M."/>
            <person name="Potier S."/>
            <person name="Proft M."/>
            <person name="Purnelle B."/>
            <person name="Ramezani Rad M."/>
            <person name="Rieger M."/>
            <person name="Rose M."/>
            <person name="Schaaff-Gerstenschlaeger I."/>
            <person name="Scherens B."/>
            <person name="Schwarzlose C."/>
            <person name="Skala J."/>
            <person name="Slonimski P.P."/>
            <person name="Smits P.H.M."/>
            <person name="Souciet J.-L."/>
            <person name="Steensma H.Y."/>
            <person name="Stucka R."/>
            <person name="Urrestarazu L.A."/>
            <person name="van der Aart Q.J.M."/>
            <person name="Van Dyck L."/>
            <person name="Vassarotti A."/>
            <person name="Vetter I."/>
            <person name="Vierendeels F."/>
            <person name="Vissers S."/>
            <person name="Wagner G."/>
            <person name="de Wergifosse P."/>
            <person name="Wolfe K.H."/>
            <person name="Zagulski M."/>
            <person name="Zimmermann F.K."/>
            <person name="Mewes H.-W."/>
            <person name="Kleine K."/>
        </authorList>
    </citation>
    <scope>NUCLEOTIDE SEQUENCE [LARGE SCALE GENOMIC DNA]</scope>
    <source>
        <strain>ATCC 204508 / S288c</strain>
    </source>
</reference>
<reference key="3">
    <citation type="journal article" date="2014" name="G3 (Bethesda)">
        <title>The reference genome sequence of Saccharomyces cerevisiae: Then and now.</title>
        <authorList>
            <person name="Engel S.R."/>
            <person name="Dietrich F.S."/>
            <person name="Fisk D.G."/>
            <person name="Binkley G."/>
            <person name="Balakrishnan R."/>
            <person name="Costanzo M.C."/>
            <person name="Dwight S.S."/>
            <person name="Hitz B.C."/>
            <person name="Karra K."/>
            <person name="Nash R.S."/>
            <person name="Weng S."/>
            <person name="Wong E.D."/>
            <person name="Lloyd P."/>
            <person name="Skrzypek M.S."/>
            <person name="Miyasato S.R."/>
            <person name="Simison M."/>
            <person name="Cherry J.M."/>
        </authorList>
    </citation>
    <scope>GENOME REANNOTATION</scope>
    <source>
        <strain>ATCC 204508 / S288c</strain>
    </source>
</reference>
<reference key="4">
    <citation type="journal article" date="2007" name="Genome Res.">
        <title>Approaching a complete repository of sequence-verified protein-encoding clones for Saccharomyces cerevisiae.</title>
        <authorList>
            <person name="Hu Y."/>
            <person name="Rolfs A."/>
            <person name="Bhullar B."/>
            <person name="Murthy T.V.S."/>
            <person name="Zhu C."/>
            <person name="Berger M.F."/>
            <person name="Camargo A.A."/>
            <person name="Kelley F."/>
            <person name="McCarron S."/>
            <person name="Jepson D."/>
            <person name="Richardson A."/>
            <person name="Raphael J."/>
            <person name="Moreira D."/>
            <person name="Taycher E."/>
            <person name="Zuo D."/>
            <person name="Mohr S."/>
            <person name="Kane M.F."/>
            <person name="Williamson J."/>
            <person name="Simpson A.J.G."/>
            <person name="Bulyk M.L."/>
            <person name="Harlow E."/>
            <person name="Marsischky G."/>
            <person name="Kolodner R.D."/>
            <person name="LaBaer J."/>
        </authorList>
    </citation>
    <scope>NUCLEOTIDE SEQUENCE [GENOMIC DNA]</scope>
    <source>
        <strain>ATCC 204508 / S288c</strain>
    </source>
</reference>
<dbReference type="EMBL" id="X79489">
    <property type="protein sequence ID" value="CAA55987.1"/>
    <property type="molecule type" value="Genomic_DNA"/>
</dbReference>
<dbReference type="EMBL" id="Z35869">
    <property type="protein sequence ID" value="CAA84935.1"/>
    <property type="molecule type" value="Genomic_DNA"/>
</dbReference>
<dbReference type="EMBL" id="AY693266">
    <property type="protein sequence ID" value="AAT93285.1"/>
    <property type="molecule type" value="Genomic_DNA"/>
</dbReference>
<dbReference type="PIR" id="S45387">
    <property type="entry name" value="S45387"/>
</dbReference>
<dbReference type="DIP" id="DIP-6600N"/>
<dbReference type="IntAct" id="P38161">
    <property type="interactions" value="2"/>
</dbReference>
<dbReference type="STRING" id="4932.YBL108W"/>
<dbReference type="PaxDb" id="4932-YBL108W"/>
<dbReference type="EnsemblFungi" id="YBL108W_mRNA">
    <property type="protein sequence ID" value="YBL108W"/>
    <property type="gene ID" value="YBL108W"/>
</dbReference>
<dbReference type="AGR" id="SGD:S000000204"/>
<dbReference type="SGD" id="S000000204">
    <property type="gene designation" value="YBL108W"/>
</dbReference>
<dbReference type="GeneTree" id="ENSGT00940000177730"/>
<dbReference type="HOGENOM" id="CLU_173518_0_0_1"/>
<proteinExistence type="uncertain"/>
<organism>
    <name type="scientific">Saccharomyces cerevisiae (strain ATCC 204508 / S288c)</name>
    <name type="common">Baker's yeast</name>
    <dbReference type="NCBI Taxonomy" id="559292"/>
    <lineage>
        <taxon>Eukaryota</taxon>
        <taxon>Fungi</taxon>
        <taxon>Dikarya</taxon>
        <taxon>Ascomycota</taxon>
        <taxon>Saccharomycotina</taxon>
        <taxon>Saccharomycetes</taxon>
        <taxon>Saccharomycetales</taxon>
        <taxon>Saccharomycetaceae</taxon>
        <taxon>Saccharomyces</taxon>
    </lineage>
</organism>
<accession>P38161</accession>
<evidence type="ECO:0000305" key="1"/>
<evidence type="ECO:0000305" key="2">
    <source>
    </source>
</evidence>
<protein>
    <recommendedName>
        <fullName>Putative UPF0377 protein YBL108W</fullName>
    </recommendedName>
</protein>
<feature type="chain" id="PRO_0000202438" description="Putative UPF0377 protein YBL108W">
    <location>
        <begin position="1"/>
        <end position="101"/>
    </location>
</feature>
<name>YBK8_YEAST</name>
<sequence>MEMLLFLNESYIFHRFRMWSIVLWHSCVFVCAECGNAYYRGAGGCLEKPFCAPVKFPFSVKKNIRILDLDPRSEAYCLSHHLVCPKRFPCKATSLLLIPEG</sequence>
<gene>
    <name type="ordered locus">YBL108W</name>
    <name type="ORF">YBL0801</name>
</gene>
<comment type="similarity">
    <text evidence="1">Belongs to the UPF0377 family.</text>
</comment>
<comment type="caution">
    <text evidence="2">Product of a dubious gene prediction unlikely to encode a functional protein. Because of that it is not part of the S.cerevisiae S288c complete/reference proteome set.</text>
</comment>